<keyword id="KW-0235">DNA replication</keyword>
<keyword id="KW-0238">DNA-binding</keyword>
<keyword id="KW-1048">Host nucleus</keyword>
<keyword id="KW-1185">Reference proteome</keyword>
<reference key="1">
    <citation type="journal article" date="1992" name="Virology">
        <title>Characterization of the murine cytomegalovirus genes encoding the major DNA binding protein and the ICP18.5 homolog.</title>
        <authorList>
            <person name="Messerle M."/>
            <person name="Keil G.M."/>
            <person name="Schneider K."/>
            <person name="Koszinowski U.H."/>
        </authorList>
    </citation>
    <scope>NUCLEOTIDE SEQUENCE [GENOMIC DNA]</scope>
</reference>
<reference key="2">
    <citation type="journal article" date="1996" name="J. Virol.">
        <title>Analysis of the complete DNA sequence of murine cytomegalovirus.</title>
        <authorList>
            <person name="Rawlinson W.D."/>
            <person name="Farrell H.E."/>
            <person name="Barrell B.G."/>
        </authorList>
    </citation>
    <scope>NUCLEOTIDE SEQUENCE [LARGE SCALE GENOMIC DNA]</scope>
</reference>
<gene>
    <name evidence="1" type="primary">DBP</name>
    <name type="synonym">UL57</name>
</gene>
<sequence length="1191" mass="131641">MADDDLSSLAPVAPAVWMFFLKKTRELADIVAAMSLCDKATPVVIAPLLIDLTVDRDFCGAVRTPMSTYEGGVLTKVTSFCPFAFFFHNTDEILDVVEDHGDVVHLCDDARRRFGVQAFSPLANRDRTDVDVLCDELGIAPAEYTGHVVCGNGLKELLYAGQLIPCPEEAVKVQVGAVDGVKVPLYPYTLFSGGADAAHADGPSAAVACDDPWVLEHGFYDPALSEALFYFMFTSWGQSLRVCETSRLIEAGLQQFVEDTQQTVKLTPFKKYHGYTSQKLTAVERDQLMTVDAVCSELAFSYASIYLDSVYEFSTASNFLEWPLVKNAKTHADLLDNLRDFQLHLAKHIAALIFSSNSILYQTRIVFVPSAGKGANSNPSAQDSLLKSIRFFNGLTGMYDDILNDAKKTIRFEGAVGRDEKYSPHHLAYFCGTSPQLFSTLMWFFNRMSIYSTGVTSGDTVFSHIVNAGSKLCGACGGRCCHTCYATSFIRVNTRLPGIPKQIKKEPVVVTLLSRAFADADLLGNYGKRYGLESREAGDGGGGGAGGRTDEVAAGPPAGGASGLNFVSVDRMKYLGQVLDYCKKNSLIDAITGEDIINVRTKRDFVATVTALNQTIDDAVCRFAMDVRRSGHGRDEISGSTQSFNLDLSPYATAFSPVLSFQYYRTMFSIIQNLALINAASYVVDNPLTTAQISKWVTLHFQSICGAFGTTPLKKGFLNVKDTKNLKSVEFERIMDFRSFQETGRYRKISTEIKSCKMSVQSLKSCRIKNRPISKTPQSSVFFKKGALQRKNPIKGCLSFLLFRCHEKLFPRCGLSCLEFWQRVLQNSLPRSVNVGKVEDFDNLVRFLLTVTDDYDESDVVDIQPDCLLSYVENRFHNKFLYMFGFRDYMSTIQGMSTRLTPQNHSQFPCLLKDAPKFASIAEYVLHFKKMKLDGVKAPQVATITREPVLKKLFDGRSLVSVSFAVEKYSSSMGTRDVFQFGQIGYYVGSGVDRSLNTGSMGTQDYRFMRYRYIIATKLVDVLIRRSRRENVMYDRDVVRSRVLAALDSTGLDVDPELAAIAELMEGRDEGDIPEIDDILFYVDQQEYIARSMYRKMRSLAERGVTDFSLASLREATATNATAAGSAAGGGGSATEGGGGGAAADESGPMYDFSALFSRRDEAEDVNAGLINGDDVRGDDEFELPSKRSRL</sequence>
<accession>P30672</accession>
<evidence type="ECO:0000255" key="1">
    <source>
        <dbReference type="HAMAP-Rule" id="MF_04007"/>
    </source>
</evidence>
<evidence type="ECO:0000256" key="2">
    <source>
        <dbReference type="SAM" id="MobiDB-lite"/>
    </source>
</evidence>
<comment type="function">
    <text>Single-stranded DNA-binding protein required for DNA replication.</text>
</comment>
<comment type="function">
    <text evidence="1">Plays several crucial roles in viral infection. Participates in the opening of the viral DNA origin to initiate replication by interacting with the origin-binding protein. May disrupt loops, hairpins and other secondary structures present on ssDNA to reduce and eliminate pausing of viral DNA polymerase at specific sites during elongation. Promotes viral DNA recombination by performing strand-transfer, characterized by the ability to transfer a DNA strand from a linear duplex to a complementary single-stranded DNA circle. Can also catalyze the renaturation of complementary single strands. Additionally, reorganizes the host cell nucleus, leading to the formation of prereplicative sites and replication compartments. This process is driven by the protein which can form double-helical filaments in the absence of DNA.</text>
</comment>
<comment type="subunit">
    <text evidence="1">Homooligomers. Forms double-helical filaments necessary for the formation of replication compartments within the host nucleus. Interacts with the origin-binding protein. Interacts with the helicase primase complex; this interaction stimulates primer synthesis activity of the helicase-primase complex. Interacts with the DNA polymerase. Interacts with the alkaline exonuclease; this interaction increases its nuclease processivity.</text>
</comment>
<comment type="subcellular location">
    <subcellularLocation>
        <location evidence="1">Host nucleus</location>
    </subcellularLocation>
    <text evidence="1">In the absence of DNA replication, found in the nuclear framework-associated structures (prereplicative sites). As viral DNA replication proceeds, it migrates to globular intranuclear structures (replication compartments).</text>
</comment>
<comment type="similarity">
    <text evidence="1">Belongs to the herpesviridae major DNA-binding protein family.</text>
</comment>
<organismHost>
    <name type="scientific">Mus musculus</name>
    <name type="common">Mouse</name>
    <dbReference type="NCBI Taxonomy" id="10090"/>
</organismHost>
<proteinExistence type="inferred from homology"/>
<name>DNBI_MUHVS</name>
<organism>
    <name type="scientific">Murid herpesvirus 1 (strain Smith)</name>
    <name type="common">MuHV-1</name>
    <name type="synonym">Mouse cytomegalovirus</name>
    <dbReference type="NCBI Taxonomy" id="10367"/>
    <lineage>
        <taxon>Viruses</taxon>
        <taxon>Duplodnaviria</taxon>
        <taxon>Heunggongvirae</taxon>
        <taxon>Peploviricota</taxon>
        <taxon>Herviviricetes</taxon>
        <taxon>Herpesvirales</taxon>
        <taxon>Orthoherpesviridae</taxon>
        <taxon>Betaherpesvirinae</taxon>
        <taxon>Muromegalovirus</taxon>
        <taxon>Muromegalovirus muridbeta1</taxon>
        <taxon>Murid herpesvirus 1</taxon>
    </lineage>
</organism>
<protein>
    <recommendedName>
        <fullName evidence="1">Major DNA-binding protein</fullName>
    </recommendedName>
</protein>
<dbReference type="EMBL" id="X67021">
    <property type="protein sequence ID" value="CAA47414.1"/>
    <property type="molecule type" value="Genomic_DNA"/>
</dbReference>
<dbReference type="EMBL" id="U68299">
    <property type="status" value="NOT_ANNOTATED_CDS"/>
    <property type="molecule type" value="Genomic_DNA"/>
</dbReference>
<dbReference type="PIR" id="A44051">
    <property type="entry name" value="A44051"/>
</dbReference>
<dbReference type="SMR" id="P30672"/>
<dbReference type="Proteomes" id="UP000008774">
    <property type="component" value="Segment"/>
</dbReference>
<dbReference type="GO" id="GO:0042025">
    <property type="term" value="C:host cell nucleus"/>
    <property type="evidence" value="ECO:0007669"/>
    <property type="project" value="UniProtKB-SubCell"/>
</dbReference>
<dbReference type="GO" id="GO:0003697">
    <property type="term" value="F:single-stranded DNA binding"/>
    <property type="evidence" value="ECO:0007669"/>
    <property type="project" value="InterPro"/>
</dbReference>
<dbReference type="GO" id="GO:0006260">
    <property type="term" value="P:DNA replication"/>
    <property type="evidence" value="ECO:0007669"/>
    <property type="project" value="UniProtKB-KW"/>
</dbReference>
<dbReference type="Gene3D" id="1.20.190.40">
    <property type="entry name" value="Viral ssDNA binding protein, head domain"/>
    <property type="match status" value="1"/>
</dbReference>
<dbReference type="HAMAP" id="MF_04007">
    <property type="entry name" value="HSV_DNBI"/>
    <property type="match status" value="1"/>
</dbReference>
<dbReference type="InterPro" id="IPR035989">
    <property type="entry name" value="DBP_sf"/>
</dbReference>
<dbReference type="InterPro" id="IPR043031">
    <property type="entry name" value="Viral_ssDBP_head"/>
</dbReference>
<dbReference type="InterPro" id="IPR000635">
    <property type="entry name" value="Viral_ssDNA-bd"/>
</dbReference>
<dbReference type="Pfam" id="PF00747">
    <property type="entry name" value="Viral_DNA_bp"/>
    <property type="match status" value="1"/>
</dbReference>
<dbReference type="SUPFAM" id="SSF118208">
    <property type="entry name" value="Viral ssDNA binding protein"/>
    <property type="match status" value="1"/>
</dbReference>
<feature type="chain" id="PRO_0000115761" description="Major DNA-binding protein">
    <location>
        <begin position="1"/>
        <end position="1191"/>
    </location>
</feature>
<feature type="region of interest" description="Disordered" evidence="2">
    <location>
        <begin position="1122"/>
        <end position="1146"/>
    </location>
</feature>
<feature type="region of interest" description="Disordered" evidence="2">
    <location>
        <begin position="1168"/>
        <end position="1191"/>
    </location>
</feature>
<feature type="region of interest" description="Required for nuclear localization" evidence="1">
    <location>
        <begin position="1173"/>
        <end position="1191"/>
    </location>
</feature>
<feature type="short sequence motif" description="Required for filament formation" evidence="1">
    <location>
        <begin position="820"/>
        <end position="821"/>
    </location>
</feature>
<feature type="compositionally biased region" description="Gly residues" evidence="2">
    <location>
        <begin position="1127"/>
        <end position="1142"/>
    </location>
</feature>